<feature type="chain" id="PRO_0000260771" description="Cystic fibrosis transmembrane conductance regulator">
    <location>
        <begin position="1"/>
        <end position="1481"/>
    </location>
</feature>
<feature type="topological domain" description="Cytoplasmic" evidence="1">
    <location>
        <begin position="1"/>
        <end position="77"/>
    </location>
</feature>
<feature type="transmembrane region" description="Helical; Name=1" evidence="1">
    <location>
        <begin position="78"/>
        <end position="98"/>
    </location>
</feature>
<feature type="topological domain" description="Extracellular" evidence="1">
    <location>
        <begin position="99"/>
        <end position="122"/>
    </location>
</feature>
<feature type="transmembrane region" description="Helical; Name=2" evidence="1">
    <location>
        <begin position="123"/>
        <end position="146"/>
    </location>
</feature>
<feature type="topological domain" description="Cytoplasmic" evidence="1">
    <location>
        <begin position="147"/>
        <end position="195"/>
    </location>
</feature>
<feature type="transmembrane region" description="Helical; Name=3" evidence="1">
    <location>
        <begin position="196"/>
        <end position="216"/>
    </location>
</feature>
<feature type="topological domain" description="Extracellular" evidence="1">
    <location>
        <begin position="217"/>
        <end position="222"/>
    </location>
</feature>
<feature type="transmembrane region" description="Helical; Name=4" evidence="1">
    <location>
        <begin position="223"/>
        <end position="243"/>
    </location>
</feature>
<feature type="topological domain" description="Cytoplasmic" evidence="1">
    <location>
        <begin position="244"/>
        <end position="298"/>
    </location>
</feature>
<feature type="transmembrane region" description="Helical; Name=5" evidence="1">
    <location>
        <begin position="299"/>
        <end position="319"/>
    </location>
</feature>
<feature type="topological domain" description="Extracellular" evidence="1">
    <location>
        <begin position="320"/>
        <end position="339"/>
    </location>
</feature>
<feature type="transmembrane region" description="Helical; Name=6" evidence="1">
    <location>
        <begin position="340"/>
        <end position="358"/>
    </location>
</feature>
<feature type="topological domain" description="Cytoplasmic" evidence="1">
    <location>
        <begin position="359"/>
        <end position="858"/>
    </location>
</feature>
<feature type="transmembrane region" description="Helical; Name=7" evidence="1">
    <location>
        <begin position="859"/>
        <end position="879"/>
    </location>
</feature>
<feature type="topological domain" description="Extracellular" evidence="1">
    <location>
        <begin position="880"/>
        <end position="918"/>
    </location>
</feature>
<feature type="transmembrane region" description="Discontinuously helical; Name=8" evidence="1">
    <location>
        <begin position="919"/>
        <end position="939"/>
    </location>
</feature>
<feature type="topological domain" description="Cytoplasmic" evidence="1">
    <location>
        <begin position="940"/>
        <end position="990"/>
    </location>
</feature>
<feature type="transmembrane region" description="Helical; Name=9" evidence="1">
    <location>
        <begin position="991"/>
        <end position="1011"/>
    </location>
</feature>
<feature type="topological domain" description="Extracellular" evidence="1">
    <location>
        <begin position="1012"/>
        <end position="1013"/>
    </location>
</feature>
<feature type="transmembrane region" description="Helical; Name=10" evidence="1">
    <location>
        <begin position="1014"/>
        <end position="1034"/>
    </location>
</feature>
<feature type="topological domain" description="Cytoplasmic" evidence="1">
    <location>
        <begin position="1035"/>
        <end position="1095"/>
    </location>
</feature>
<feature type="transmembrane region" description="Helical; Name=11" evidence="1">
    <location>
        <begin position="1096"/>
        <end position="1116"/>
    </location>
</feature>
<feature type="topological domain" description="Extracellular" evidence="1">
    <location>
        <begin position="1117"/>
        <end position="1130"/>
    </location>
</feature>
<feature type="transmembrane region" description="Helical; Name=12" evidence="1">
    <location>
        <begin position="1131"/>
        <end position="1151"/>
    </location>
</feature>
<feature type="topological domain" description="Cytoplasmic" evidence="1">
    <location>
        <begin position="1152"/>
        <end position="1481"/>
    </location>
</feature>
<feature type="domain" description="ABC transmembrane type-1 1" evidence="6">
    <location>
        <begin position="81"/>
        <end position="365"/>
    </location>
</feature>
<feature type="domain" description="ABC transporter 1" evidence="5">
    <location>
        <begin position="423"/>
        <end position="646"/>
    </location>
</feature>
<feature type="domain" description="ABC transmembrane type-1 2" evidence="6">
    <location>
        <begin position="859"/>
        <end position="1155"/>
    </location>
</feature>
<feature type="domain" description="ABC transporter 2" evidence="5">
    <location>
        <begin position="1211"/>
        <end position="1444"/>
    </location>
</feature>
<feature type="region of interest" description="Disordered R region" evidence="1">
    <location>
        <begin position="654"/>
        <end position="831"/>
    </location>
</feature>
<feature type="region of interest" description="Interaction with GORASP2" evidence="1">
    <location>
        <begin position="1387"/>
        <end position="1481"/>
    </location>
</feature>
<feature type="region of interest" description="Disordered" evidence="7">
    <location>
        <begin position="1462"/>
        <end position="1481"/>
    </location>
</feature>
<feature type="short sequence motif" description="PDZ-binding" evidence="1">
    <location>
        <begin position="1479"/>
        <end position="1481"/>
    </location>
</feature>
<feature type="compositionally biased region" description="Acidic residues" evidence="7">
    <location>
        <begin position="1471"/>
        <end position="1481"/>
    </location>
</feature>
<feature type="binding site" evidence="1">
    <location>
        <position position="401"/>
    </location>
    <ligand>
        <name>ATP</name>
        <dbReference type="ChEBI" id="CHEBI:30616"/>
        <label>1</label>
    </ligand>
</feature>
<feature type="binding site" evidence="1">
    <location>
        <position position="434"/>
    </location>
    <ligand>
        <name>ATP</name>
        <dbReference type="ChEBI" id="CHEBI:30616"/>
        <label>1</label>
    </ligand>
</feature>
<feature type="binding site" evidence="5">
    <location>
        <begin position="458"/>
        <end position="465"/>
    </location>
    <ligand>
        <name>ATP</name>
        <dbReference type="ChEBI" id="CHEBI:30616"/>
        <label>1</label>
    </ligand>
</feature>
<feature type="binding site" evidence="2">
    <location>
        <position position="493"/>
    </location>
    <ligand>
        <name>ATP</name>
        <dbReference type="ChEBI" id="CHEBI:30616"/>
        <label>1</label>
    </ligand>
</feature>
<feature type="binding site" evidence="1">
    <location>
        <position position="1220"/>
    </location>
    <ligand>
        <name>ATP</name>
        <dbReference type="ChEBI" id="CHEBI:30616"/>
        <label>2</label>
    </ligand>
</feature>
<feature type="binding site" evidence="5">
    <location>
        <begin position="1245"/>
        <end position="1252"/>
    </location>
    <ligand>
        <name>ATP</name>
        <dbReference type="ChEBI" id="CHEBI:30616"/>
        <label>2</label>
    </ligand>
</feature>
<feature type="modified residue" description="Phosphoserine" evidence="1">
    <location>
        <position position="549"/>
    </location>
</feature>
<feature type="modified residue" description="Phosphoserine" evidence="1">
    <location>
        <position position="660"/>
    </location>
</feature>
<feature type="modified residue" description="Phosphoserine; by PKA" evidence="1">
    <location>
        <position position="670"/>
    </location>
</feature>
<feature type="modified residue" description="Phosphoserine" evidence="1">
    <location>
        <position position="686"/>
    </location>
</feature>
<feature type="modified residue" description="Phosphoserine" evidence="1">
    <location>
        <position position="700"/>
    </location>
</feature>
<feature type="modified residue" description="Phosphoserine" evidence="1">
    <location>
        <position position="712"/>
    </location>
</feature>
<feature type="modified residue" description="Phosphothreonine" evidence="1">
    <location>
        <position position="717"/>
    </location>
</feature>
<feature type="modified residue" description="Phosphoserine" evidence="1">
    <location>
        <position position="737"/>
    </location>
</feature>
<feature type="modified residue" description="Phosphoserine" evidence="1">
    <location>
        <position position="753"/>
    </location>
</feature>
<feature type="modified residue" description="Phosphoserine" evidence="1">
    <location>
        <position position="768"/>
    </location>
</feature>
<feature type="modified residue" description="Phosphoserine" evidence="1">
    <location>
        <position position="790"/>
    </location>
</feature>
<feature type="modified residue" description="Phosphoserine" evidence="1">
    <location>
        <position position="795"/>
    </location>
</feature>
<feature type="modified residue" description="Phosphoserine" evidence="1">
    <location>
        <position position="813"/>
    </location>
</feature>
<feature type="modified residue" description="Phosphoserine" evidence="1">
    <location>
        <position position="1445"/>
    </location>
</feature>
<feature type="modified residue" description="Phosphoserine" evidence="1">
    <location>
        <position position="1457"/>
    </location>
</feature>
<feature type="lipid moiety-binding region" description="S-palmitoyl cysteine" evidence="1">
    <location>
        <position position="524"/>
    </location>
</feature>
<feature type="lipid moiety-binding region" description="S-palmitoyl cysteine" evidence="1">
    <location>
        <position position="1396"/>
    </location>
</feature>
<feature type="glycosylation site" description="N-linked (GlcNAc...) asparagine" evidence="4">
    <location>
        <position position="894"/>
    </location>
</feature>
<feature type="glycosylation site" description="N-linked (GlcNAc...) asparagine" evidence="4">
    <location>
        <position position="900"/>
    </location>
</feature>
<feature type="cross-link" description="Glycyl lysine isopeptide (Lys-Gly) (interchain with G-Cter in ubiquitin)" evidence="1">
    <location>
        <position position="688"/>
    </location>
</feature>
<sequence>MQRSPLEKASVVSKLFFSWTRPILRKGYRQRLELSDIYQIPSADSADNLSEKLEREWDRELASKKNPKLINALRRCFFWRFMFYGILLYLGEVTKAVQPLLLGRIIASYDPDNKEERSIAIYLGIGLCLLFIVRTLLLHPAIFGLHHIGMQMRIAMFSLIYKKTLKLSSRVLDKISIGQLVSLLSNNLNKFDEGLALAHFVWIVPLQVALLMGLIWELLQASAFCGLGFLIVLALFQAGLGRMMMKYRDQRAGKINERLVITSEMIENIQSVKAYCWEEAMEKMIENLRQTELKLTRKAAYVRYFNSSAFFFSGFFVVFLSVLPYALIKGIVLRKIFTTISFCIVLRMAVTRQFPWAVQTWYDSLGAINKIQDFLQKQEYKTLEYNLTTTEVVMENVTAFWEEGFGELFEKAKQNNSNRKTSNDDDSLFFSNFSLLGTPVLKDINFKIERGQLLAVAGSTGAGKTSLLMMIMGELEPSEGKIKHSGRISFCSQFSWIMPGTIKENIIFGVSYDEYRYRSVIKACQLEEDISKFAEKDNIVLGEGGITLSGGQRARISLARAVYKDADLYLLDSPFGYLDVLTEKEIFESCVCKLMANKTRILVTSKMEHLKKADKILILHEGSSYFYGTFSELQNLRPDFSSKLMGYDSFDQFSAERRNSILTETLRRFSLEGDAPVSWTETKKQSFKQTGEFGEKRKNSILNPINSVRKFSIVQKTPLQMNGIEEDSDEPLERRLSLVPDSEQGEVILPRISVISTGPTLQARRRQSVLNLMTHSVNQGHSIHRKTAASTRKVSLAPQANLTELDIYSRRLSQETGLEISEEINEEDLKECFFDDMESIPAVTTWNTYLRYITVHKSLIFVLIWCLVIFLAEVAASLVVLWFLGNTPPQDKGNSTYSRNNSYAVIITRTSSYYVFYIYVGVADTLLAMGFFRGLPLVHTLITVSKILHHKMLHSVLQAPMSTLNTLKAGGILNRFSKDIAILDDLLPLTIFDFIQLLLIVIGAIAVVAVLQPYIFVATVPVIVAFIMLRAYFLQTSQQLKQLESEGRSPIFTHLVTSLKGLWTLRAFGRQPYFETLFHKALNLHTANWFLYLSTLRWFQMRIEMIFVIFFIAVTFISILTTGEGEGTVGIILTLAMNIMSTLQWAVNSSIDVDSLMRSVSRVFKFIDMPTEEGKPTRSTKPYKNGQLSKVMIIENSHVKKDDIWPSGGQMTVKDLTAKYTEGGNPILENISFSISPGQRVGLLGRTGSGKSTLLSAFLRLLNTEGEIQIDGVSWDSITLQQWRKAFGVIPQKVFIFSGTFRKNLDPYEQWSDQEIWEVADEVGLRSVIEQFPGKLDFVLVDGGCVLSHGHKQLMCLARSVLSKAKILLLDEPSAHLDPVTYQIIRRTLKQAFADCTVILCEHRIEAMLECQQFLVIEENKVRQYDSIQKLLNERSLFRQAISPSDRVKLFPHRNSSKCKSQPQIAALKEETEEEVQDTRL</sequence>
<dbReference type="EC" id="5.6.1.6" evidence="1"/>
<dbReference type="EMBL" id="DP000029">
    <property type="protein sequence ID" value="ABC87491.1"/>
    <property type="molecule type" value="Genomic_DNA"/>
</dbReference>
<dbReference type="SMR" id="Q2IBA1"/>
<dbReference type="GlyCosmos" id="Q2IBA1">
    <property type="glycosylation" value="2 sites, No reported glycans"/>
</dbReference>
<dbReference type="GO" id="GO:0016324">
    <property type="term" value="C:apical plasma membrane"/>
    <property type="evidence" value="ECO:0000250"/>
    <property type="project" value="UniProtKB"/>
</dbReference>
<dbReference type="GO" id="GO:0034707">
    <property type="term" value="C:chloride channel complex"/>
    <property type="evidence" value="ECO:0007669"/>
    <property type="project" value="UniProtKB-KW"/>
</dbReference>
<dbReference type="GO" id="GO:0005829">
    <property type="term" value="C:cytosol"/>
    <property type="evidence" value="ECO:0007669"/>
    <property type="project" value="TreeGrafter"/>
</dbReference>
<dbReference type="GO" id="GO:0005769">
    <property type="term" value="C:early endosome"/>
    <property type="evidence" value="ECO:0000250"/>
    <property type="project" value="UniProtKB"/>
</dbReference>
<dbReference type="GO" id="GO:0031901">
    <property type="term" value="C:early endosome membrane"/>
    <property type="evidence" value="ECO:0007669"/>
    <property type="project" value="UniProtKB-SubCell"/>
</dbReference>
<dbReference type="GO" id="GO:0005789">
    <property type="term" value="C:endoplasmic reticulum membrane"/>
    <property type="evidence" value="ECO:0000250"/>
    <property type="project" value="UniProtKB"/>
</dbReference>
<dbReference type="GO" id="GO:0016020">
    <property type="term" value="C:membrane"/>
    <property type="evidence" value="ECO:0000250"/>
    <property type="project" value="UniProtKB"/>
</dbReference>
<dbReference type="GO" id="GO:0005634">
    <property type="term" value="C:nucleus"/>
    <property type="evidence" value="ECO:0000250"/>
    <property type="project" value="UniProtKB"/>
</dbReference>
<dbReference type="GO" id="GO:0005886">
    <property type="term" value="C:plasma membrane"/>
    <property type="evidence" value="ECO:0000250"/>
    <property type="project" value="UniProtKB"/>
</dbReference>
<dbReference type="GO" id="GO:0055038">
    <property type="term" value="C:recycling endosome membrane"/>
    <property type="evidence" value="ECO:0007669"/>
    <property type="project" value="UniProtKB-SubCell"/>
</dbReference>
<dbReference type="GO" id="GO:0140359">
    <property type="term" value="F:ABC-type transporter activity"/>
    <property type="evidence" value="ECO:0007669"/>
    <property type="project" value="InterPro"/>
</dbReference>
<dbReference type="GO" id="GO:0005524">
    <property type="term" value="F:ATP binding"/>
    <property type="evidence" value="ECO:0007669"/>
    <property type="project" value="UniProtKB-KW"/>
</dbReference>
<dbReference type="GO" id="GO:0016887">
    <property type="term" value="F:ATP hydrolysis activity"/>
    <property type="evidence" value="ECO:0000250"/>
    <property type="project" value="UniProtKB"/>
</dbReference>
<dbReference type="GO" id="GO:0015106">
    <property type="term" value="F:bicarbonate transmembrane transporter activity"/>
    <property type="evidence" value="ECO:0000250"/>
    <property type="project" value="UniProtKB"/>
</dbReference>
<dbReference type="GO" id="GO:0005254">
    <property type="term" value="F:chloride channel activity"/>
    <property type="evidence" value="ECO:0000250"/>
    <property type="project" value="UniProtKB"/>
</dbReference>
<dbReference type="GO" id="GO:0019869">
    <property type="term" value="F:chloride channel inhibitor activity"/>
    <property type="evidence" value="ECO:0000250"/>
    <property type="project" value="UniProtKB"/>
</dbReference>
<dbReference type="GO" id="GO:0015108">
    <property type="term" value="F:chloride transmembrane transporter activity"/>
    <property type="evidence" value="ECO:0000250"/>
    <property type="project" value="UniProtKB"/>
</dbReference>
<dbReference type="GO" id="GO:0005260">
    <property type="term" value="F:intracellularly ATP-gated chloride channel activity"/>
    <property type="evidence" value="ECO:0000250"/>
    <property type="project" value="UniProtKB"/>
</dbReference>
<dbReference type="GO" id="GO:0015701">
    <property type="term" value="P:bicarbonate transport"/>
    <property type="evidence" value="ECO:0000250"/>
    <property type="project" value="UniProtKB"/>
</dbReference>
<dbReference type="GO" id="GO:0071320">
    <property type="term" value="P:cellular response to cAMP"/>
    <property type="evidence" value="ECO:0000250"/>
    <property type="project" value="UniProtKB"/>
</dbReference>
<dbReference type="GO" id="GO:1904322">
    <property type="term" value="P:cellular response to forskolin"/>
    <property type="evidence" value="ECO:0000250"/>
    <property type="project" value="UniProtKB"/>
</dbReference>
<dbReference type="GO" id="GO:1902476">
    <property type="term" value="P:chloride transmembrane transport"/>
    <property type="evidence" value="ECO:0000250"/>
    <property type="project" value="UniProtKB"/>
</dbReference>
<dbReference type="GO" id="GO:0051454">
    <property type="term" value="P:intracellular pH elevation"/>
    <property type="evidence" value="ECO:0000250"/>
    <property type="project" value="UniProtKB"/>
</dbReference>
<dbReference type="GO" id="GO:0060081">
    <property type="term" value="P:membrane hyperpolarization"/>
    <property type="evidence" value="ECO:0000250"/>
    <property type="project" value="UniProtKB"/>
</dbReference>
<dbReference type="GO" id="GO:0050891">
    <property type="term" value="P:multicellular organismal-level water homeostasis"/>
    <property type="evidence" value="ECO:0000250"/>
    <property type="project" value="UniProtKB"/>
</dbReference>
<dbReference type="GO" id="GO:0034976">
    <property type="term" value="P:response to endoplasmic reticulum stress"/>
    <property type="evidence" value="ECO:0000250"/>
    <property type="project" value="UniProtKB"/>
</dbReference>
<dbReference type="GO" id="GO:0048240">
    <property type="term" value="P:sperm capacitation"/>
    <property type="evidence" value="ECO:0000250"/>
    <property type="project" value="UniProtKB"/>
</dbReference>
<dbReference type="GO" id="GO:0035377">
    <property type="term" value="P:transepithelial water transport"/>
    <property type="evidence" value="ECO:0000250"/>
    <property type="project" value="UniProtKB"/>
</dbReference>
<dbReference type="CDD" id="cd18594">
    <property type="entry name" value="ABC_6TM_CFTR_D1"/>
    <property type="match status" value="1"/>
</dbReference>
<dbReference type="CDD" id="cd18600">
    <property type="entry name" value="ABC_6TM_CFTR_D2"/>
    <property type="match status" value="1"/>
</dbReference>
<dbReference type="CDD" id="cd03291">
    <property type="entry name" value="ABCC_CFTR1"/>
    <property type="match status" value="1"/>
</dbReference>
<dbReference type="CDD" id="cd03289">
    <property type="entry name" value="ABCC_CFTR2"/>
    <property type="match status" value="1"/>
</dbReference>
<dbReference type="FunFam" id="1.20.1560.10:FF:000017">
    <property type="entry name" value="Cystic fibrosis transmembrane conductance regulator"/>
    <property type="match status" value="1"/>
</dbReference>
<dbReference type="FunFam" id="1.20.1560.10:FF:000019">
    <property type="entry name" value="Cystic fibrosis transmembrane conductance regulator"/>
    <property type="match status" value="1"/>
</dbReference>
<dbReference type="FunFam" id="3.40.50.300:FF:000581">
    <property type="entry name" value="Cystic fibrosis transmembrane conductance regulator"/>
    <property type="match status" value="1"/>
</dbReference>
<dbReference type="FunFam" id="3.40.50.300:FF:000591">
    <property type="entry name" value="Cystic fibrosis transmembrane conductance regulator"/>
    <property type="match status" value="1"/>
</dbReference>
<dbReference type="Gene3D" id="1.20.1560.10">
    <property type="entry name" value="ABC transporter type 1, transmembrane domain"/>
    <property type="match status" value="2"/>
</dbReference>
<dbReference type="Gene3D" id="3.40.50.300">
    <property type="entry name" value="P-loop containing nucleotide triphosphate hydrolases"/>
    <property type="match status" value="2"/>
</dbReference>
<dbReference type="InterPro" id="IPR003593">
    <property type="entry name" value="AAA+_ATPase"/>
</dbReference>
<dbReference type="InterPro" id="IPR011527">
    <property type="entry name" value="ABC1_TM_dom"/>
</dbReference>
<dbReference type="InterPro" id="IPR036640">
    <property type="entry name" value="ABC1_TM_sf"/>
</dbReference>
<dbReference type="InterPro" id="IPR003439">
    <property type="entry name" value="ABC_transporter-like_ATP-bd"/>
</dbReference>
<dbReference type="InterPro" id="IPR017871">
    <property type="entry name" value="ABC_transporter-like_CS"/>
</dbReference>
<dbReference type="InterPro" id="IPR050173">
    <property type="entry name" value="ABC_transporter_C-like"/>
</dbReference>
<dbReference type="InterPro" id="IPR009147">
    <property type="entry name" value="CFTR/ABCC7"/>
</dbReference>
<dbReference type="InterPro" id="IPR047082">
    <property type="entry name" value="CFTR1_ATP-bd_dom1"/>
</dbReference>
<dbReference type="InterPro" id="IPR025837">
    <property type="entry name" value="CFTR_reg_dom"/>
</dbReference>
<dbReference type="InterPro" id="IPR027417">
    <property type="entry name" value="P-loop_NTPase"/>
</dbReference>
<dbReference type="NCBIfam" id="TIGR01271">
    <property type="entry name" value="CFTR_protein"/>
    <property type="match status" value="1"/>
</dbReference>
<dbReference type="PANTHER" id="PTHR24223">
    <property type="entry name" value="ATP-BINDING CASSETTE SUB-FAMILY C"/>
    <property type="match status" value="1"/>
</dbReference>
<dbReference type="PANTHER" id="PTHR24223:SF19">
    <property type="entry name" value="CYSTIC FIBROSIS TRANSMEMBRANE CONDUCTANCE REGULATOR"/>
    <property type="match status" value="1"/>
</dbReference>
<dbReference type="Pfam" id="PF00664">
    <property type="entry name" value="ABC_membrane"/>
    <property type="match status" value="2"/>
</dbReference>
<dbReference type="Pfam" id="PF00005">
    <property type="entry name" value="ABC_tran"/>
    <property type="match status" value="2"/>
</dbReference>
<dbReference type="Pfam" id="PF14396">
    <property type="entry name" value="CFTR_R"/>
    <property type="match status" value="1"/>
</dbReference>
<dbReference type="PRINTS" id="PR01851">
    <property type="entry name" value="CYSFIBREGLTR"/>
</dbReference>
<dbReference type="SMART" id="SM00382">
    <property type="entry name" value="AAA"/>
    <property type="match status" value="2"/>
</dbReference>
<dbReference type="SUPFAM" id="SSF90123">
    <property type="entry name" value="ABC transporter transmembrane region"/>
    <property type="match status" value="2"/>
</dbReference>
<dbReference type="SUPFAM" id="SSF52540">
    <property type="entry name" value="P-loop containing nucleoside triphosphate hydrolases"/>
    <property type="match status" value="2"/>
</dbReference>
<dbReference type="PROSITE" id="PS50929">
    <property type="entry name" value="ABC_TM1F"/>
    <property type="match status" value="2"/>
</dbReference>
<dbReference type="PROSITE" id="PS00211">
    <property type="entry name" value="ABC_TRANSPORTER_1"/>
    <property type="match status" value="1"/>
</dbReference>
<dbReference type="PROSITE" id="PS50893">
    <property type="entry name" value="ABC_TRANSPORTER_2"/>
    <property type="match status" value="2"/>
</dbReference>
<reference key="1">
    <citation type="submission" date="2006-01" db="EMBL/GenBank/DDBJ databases">
        <title>NISC comparative sequencing initiative.</title>
        <authorList>
            <person name="Antonellis A."/>
            <person name="Ayele K."/>
            <person name="Benjamin B."/>
            <person name="Blakesley R.W."/>
            <person name="Boakye A."/>
            <person name="Bouffard G.G."/>
            <person name="Brinkley C."/>
            <person name="Brooks S."/>
            <person name="Chu G."/>
            <person name="Coleman H."/>
            <person name="Engle J."/>
            <person name="Gestole M."/>
            <person name="Greene A."/>
            <person name="Guan X."/>
            <person name="Gupta J."/>
            <person name="Haghighi P."/>
            <person name="Han J."/>
            <person name="Hansen N."/>
            <person name="Ho S.-L."/>
            <person name="Hu P."/>
            <person name="Hunter G."/>
            <person name="Hurle B."/>
            <person name="Idol J.R."/>
            <person name="Kwong P."/>
            <person name="Laric P."/>
            <person name="Larson S."/>
            <person name="Lee-Lin S.-Q."/>
            <person name="Legaspi R."/>
            <person name="Madden M."/>
            <person name="Maduro Q.L."/>
            <person name="Maduro V.B."/>
            <person name="Margulies E.H."/>
            <person name="Masiello C."/>
            <person name="Maskeri B."/>
            <person name="McDowell J."/>
            <person name="Mojidi H.A."/>
            <person name="Mullikin J.C."/>
            <person name="Oestreicher J.S."/>
            <person name="Park M."/>
            <person name="Portnoy M.E."/>
            <person name="Prasad A."/>
            <person name="Puri O."/>
            <person name="Reddix-Dugue N."/>
            <person name="Schandler K."/>
            <person name="Schueler M.G."/>
            <person name="Sison C."/>
            <person name="Stantripop S."/>
            <person name="Stephen E."/>
            <person name="Taye A."/>
            <person name="Thomas J.W."/>
            <person name="Thomas P.J."/>
            <person name="Tsipouri V."/>
            <person name="Ung L."/>
            <person name="Vogt J.L."/>
            <person name="Wetherby K.D."/>
            <person name="Young A."/>
            <person name="Green E.D."/>
        </authorList>
    </citation>
    <scope>NUCLEOTIDE SEQUENCE [LARGE SCALE GENOMIC DNA]</scope>
</reference>
<keyword id="KW-0067">ATP-binding</keyword>
<keyword id="KW-1003">Cell membrane</keyword>
<keyword id="KW-0868">Chloride</keyword>
<keyword id="KW-0869">Chloride channel</keyword>
<keyword id="KW-0256">Endoplasmic reticulum</keyword>
<keyword id="KW-0967">Endosome</keyword>
<keyword id="KW-0325">Glycoprotein</keyword>
<keyword id="KW-0407">Ion channel</keyword>
<keyword id="KW-0406">Ion transport</keyword>
<keyword id="KW-0413">Isomerase</keyword>
<keyword id="KW-1017">Isopeptide bond</keyword>
<keyword id="KW-0449">Lipoprotein</keyword>
<keyword id="KW-0472">Membrane</keyword>
<keyword id="KW-0547">Nucleotide-binding</keyword>
<keyword id="KW-0539">Nucleus</keyword>
<keyword id="KW-0564">Palmitate</keyword>
<keyword id="KW-0597">Phosphoprotein</keyword>
<keyword id="KW-0677">Repeat</keyword>
<keyword id="KW-0812">Transmembrane</keyword>
<keyword id="KW-1133">Transmembrane helix</keyword>
<keyword id="KW-0813">Transport</keyword>
<keyword id="KW-0832">Ubl conjugation</keyword>
<proteinExistence type="inferred from homology"/>
<accession>Q2IBA1</accession>
<name>CFTR_CHLAE</name>
<protein>
    <recommendedName>
        <fullName evidence="1">Cystic fibrosis transmembrane conductance regulator</fullName>
        <shortName>CFTR</shortName>
    </recommendedName>
    <alternativeName>
        <fullName>ATP-binding cassette sub-family C member 7</fullName>
    </alternativeName>
    <alternativeName>
        <fullName>Channel conductance-controlling ATPase</fullName>
        <ecNumber evidence="1">5.6.1.6</ecNumber>
    </alternativeName>
    <alternativeName>
        <fullName>cAMP-dependent chloride channel</fullName>
    </alternativeName>
</protein>
<gene>
    <name evidence="1" type="primary">CFTR</name>
    <name type="synonym">ABCC7</name>
</gene>
<organism>
    <name type="scientific">Chlorocebus aethiops</name>
    <name type="common">Green monkey</name>
    <name type="synonym">Cercopithecus aethiops</name>
    <dbReference type="NCBI Taxonomy" id="9534"/>
    <lineage>
        <taxon>Eukaryota</taxon>
        <taxon>Metazoa</taxon>
        <taxon>Chordata</taxon>
        <taxon>Craniata</taxon>
        <taxon>Vertebrata</taxon>
        <taxon>Euteleostomi</taxon>
        <taxon>Mammalia</taxon>
        <taxon>Eutheria</taxon>
        <taxon>Euarchontoglires</taxon>
        <taxon>Primates</taxon>
        <taxon>Haplorrhini</taxon>
        <taxon>Catarrhini</taxon>
        <taxon>Cercopithecidae</taxon>
        <taxon>Cercopithecinae</taxon>
        <taxon>Chlorocebus</taxon>
    </lineage>
</organism>
<evidence type="ECO:0000250" key="1">
    <source>
        <dbReference type="UniProtKB" id="P13569"/>
    </source>
</evidence>
<evidence type="ECO:0000250" key="2">
    <source>
        <dbReference type="UniProtKB" id="P26361"/>
    </source>
</evidence>
<evidence type="ECO:0000250" key="3">
    <source>
        <dbReference type="UniProtKB" id="P34158"/>
    </source>
</evidence>
<evidence type="ECO:0000255" key="4"/>
<evidence type="ECO:0000255" key="5">
    <source>
        <dbReference type="PROSITE-ProRule" id="PRU00434"/>
    </source>
</evidence>
<evidence type="ECO:0000255" key="6">
    <source>
        <dbReference type="PROSITE-ProRule" id="PRU00441"/>
    </source>
</evidence>
<evidence type="ECO:0000256" key="7">
    <source>
        <dbReference type="SAM" id="MobiDB-lite"/>
    </source>
</evidence>
<evidence type="ECO:0000305" key="8"/>
<comment type="function">
    <text evidence="1 2">Epithelial ion channel that plays an important role in the regulation of epithelial ion and water transport and fluid homeostasis. Mediates the transport of chloride ions across the cell membrane (By similarity). Possesses an intrinsic ATPase activity and utilizes ATP to gate its channel; the passive flow of anions through the channel is gated by cycles of ATP binding and hydrolysis by the ATP-binding domains (By similarity). The ion channel is also permeable to HCO(3)(-); selectivity depends on the extracellular chloride concentration. Exerts its function also by modulating the activity of other ion channels and transporters. Contributes to the regulation of the pH and the ion content of the epithelial fluid layer. Modulates the activity of the epithelial sodium channel (ENaC) complex, in part by regulating the cell surface expression of the ENaC complex. May regulate bicarbonate secretion and salvage in epithelial cells by regulating the transporter SLC4A7. Can inhibit the chloride channel activity of ANO1 (By similarity). Plays a role in the chloride and bicarbonate homeostasis during sperm epididymal maturation and capacitation (By similarity).</text>
</comment>
<comment type="catalytic activity">
    <reaction evidence="1">
        <text>ATP + H2O + closed Cl(-) channel = ADP + phosphate + open Cl(-) channel.</text>
        <dbReference type="EC" id="5.6.1.6"/>
    </reaction>
</comment>
<comment type="catalytic activity">
    <reaction evidence="1">
        <text>chloride(in) = chloride(out)</text>
        <dbReference type="Rhea" id="RHEA:29823"/>
        <dbReference type="ChEBI" id="CHEBI:17996"/>
    </reaction>
</comment>
<comment type="catalytic activity">
    <reaction evidence="1">
        <text>hydrogencarbonate(in) = hydrogencarbonate(out)</text>
        <dbReference type="Rhea" id="RHEA:28695"/>
        <dbReference type="ChEBI" id="CHEBI:17544"/>
    </reaction>
</comment>
<comment type="catalytic activity">
    <reaction evidence="1">
        <text>ATP + H2O = ADP + phosphate + H(+)</text>
        <dbReference type="Rhea" id="RHEA:13065"/>
        <dbReference type="ChEBI" id="CHEBI:15377"/>
        <dbReference type="ChEBI" id="CHEBI:15378"/>
        <dbReference type="ChEBI" id="CHEBI:30616"/>
        <dbReference type="ChEBI" id="CHEBI:43474"/>
        <dbReference type="ChEBI" id="CHEBI:456216"/>
    </reaction>
    <physiologicalReaction direction="left-to-right" evidence="1">
        <dbReference type="Rhea" id="RHEA:13066"/>
    </physiologicalReaction>
</comment>
<comment type="subunit">
    <text evidence="1 2 3">Monomer; does not require oligomerization for channel activity. May form oligomers in the membrane (By similarity). Interacts with SLC26A3, SLC26A6 and NHERF1 (By similarity). Interacts with SHANK2 (By similarity). Interacts with MYO6 (By similarity). Interacts (via C-terminus) with GOPC (via PDZ domain); this promotes CFTR internalization and thereby decreases channel activity. Interacts with SLC4A7 through NHERF1. Found in a complex with MYO5B and RAB11A. Interacts with ANO1. Interacts with SLC26A8 (By similarity). Interacts with AHCYL1; the interaction increases CFTR activity (By similarity). Interacts with CSE1L (By similarity). The core-glycosylated form interacts with GORASP2 (via PDZ GRASP-type 1 domain) in respone to ER stress (By similarity). Interacts with MARCHF2; the interaction leads to CFTR ubiqtuitination and degradation (By similarity). Interacts with ADGRG2 (By similarity).</text>
</comment>
<comment type="subcellular location">
    <subcellularLocation>
        <location evidence="2">Apical cell membrane</location>
        <topology evidence="1">Multi-pass membrane protein</topology>
    </subcellularLocation>
    <subcellularLocation>
        <location evidence="1">Early endosome membrane</location>
        <topology evidence="1">Multi-pass membrane protein</topology>
    </subcellularLocation>
    <subcellularLocation>
        <location evidence="2">Cell membrane</location>
        <topology evidence="1">Multi-pass membrane protein</topology>
    </subcellularLocation>
    <subcellularLocation>
        <location evidence="1">Recycling endosome membrane</location>
        <topology evidence="1">Multi-pass membrane protein</topology>
    </subcellularLocation>
    <subcellularLocation>
        <location evidence="1">Endoplasmic reticulum membrane</location>
        <topology evidence="1">Multi-pass membrane protein</topology>
    </subcellularLocation>
    <subcellularLocation>
        <location evidence="3">Nucleus</location>
    </subcellularLocation>
    <text evidence="1 3">The channel is internalized from the cell surface into an endosomal recycling compartment, from where it is recycled to the cell membrane. In the oviduct and bronchus, detected on the apical side of epithelial cells, but not associated with cilia. In Sertoli cells, a processed product is detected in the nucleus. ER stress induces GORASP2-mediated unconventional (ER/Golgi-independent) trafficking of core-glycosylated CFTR to cell membrane.</text>
</comment>
<comment type="domain">
    <text evidence="1 2">Binds and hydrolyzes ATP via the two cytoplasmic ABC transporter nucleotide-binding domains. The two ATP-binding domains interact with each other, forming a head-to-tail dimer. Normal ATPase activity requires interaction between the two domains. The first ABC transporter nucleotide-binding domain has no ATPase activity by itself.</text>
</comment>
<comment type="domain">
    <text evidence="1">The PDZ-binding motif mediates interactions with GOPC and with the SLC4A7, NHERF1/EBP50 complex.</text>
</comment>
<comment type="domain">
    <text evidence="1">The disordered R region mediates channel activation when it is phosphorylated, but not in the absence of phosphorylation.</text>
</comment>
<comment type="PTM">
    <text evidence="1">N-glycosylated.</text>
</comment>
<comment type="PTM">
    <text evidence="1">Phosphorylated; cAMP treatment promotes phosphorylation and activates the channel. Dephosphorylation decreases the ATPase activity (in vitro). Phosphorylation at PKA sites activates the channel. Phosphorylation at PKC sites enhances the response to phosphorylation by PKA. Phosphorylated by AMPK; this inhibits channel activity.</text>
</comment>
<comment type="PTM">
    <text evidence="1">Ubiquitinated, leading to its degradation in the lysosome. Deubiquitination by USP10 in early endosomes enhances its endocytic recycling to the cell membrane. Ubiquitinated by RNF185 during ER stress. Ubiquitinated by MARCHF2 (By similarity).</text>
</comment>
<comment type="similarity">
    <text evidence="8">Belongs to the ABC transporter superfamily. ABCC family. CFTR transporter (TC 3.A.1.202) subfamily.</text>
</comment>